<comment type="function">
    <text evidence="1">Forms presumably a highly low-pH gated proton-selective channel. Trp-23 may function as a minimalistic gate that opens and closes the pore. When the environmental pH is lower than a threshold, the BM2 channel would be activated and selectively transport protons across the membrane from the extracellular side to the cytoplasmic side. Crucial for the uncoating process. When the virion is internalized into the endosome, the channel acidifies the virion's interior, promoting the dissociation of matrix protein 1 (M1) from the ribonucleoprotein (RNP) thus allowing the transport of the RNP from the virion into the cell's nucleus. Also plays a role in viral protein secretory pathway. Elevates the intravesicular pH of normally acidic compartments, such as trans-Golgi network, preventing newly formed hemagglutinin from premature switching to the fusion-active conformation (By similarity). Plays a crucial role in virion assembly. Expressed in the late phase of the infection (By similarity).</text>
</comment>
<comment type="subunit">
    <text evidence="1">Homotetramer.</text>
</comment>
<comment type="subcellular location">
    <subcellularLocation>
        <location evidence="3">Virion membrane</location>
        <topology evidence="3">Single-pass type III membrane protein</topology>
    </subcellularLocation>
    <subcellularLocation>
        <location evidence="1">Host cell membrane</location>
        <topology evidence="1">Single-pass type III membrane protein</topology>
    </subcellularLocation>
    <text evidence="1">Transported to the plasma membrane through the trans Golgi network.</text>
</comment>
<comment type="PTM">
    <text>Phosphorylated by host.</text>
</comment>
<comment type="miscellaneous">
    <text>Influenza B virus genome RNA segment 7 encodes the M1 (AC P13879) and BM2 proteins. Normal translation produces the M1 protein. The M1 termination codon overlaps the BM2 initiation codon in an overlapping stop-start pentanucleotide 5'-UAAUG-3'. Termination of M1 translation triggers reinitiation on the BM2 AUG in the +2 open reading frame.</text>
</comment>
<protein>
    <recommendedName>
        <fullName>Matrix protein 2</fullName>
    </recommendedName>
    <alternativeName>
        <fullName>BM2</fullName>
    </alternativeName>
</protein>
<proteinExistence type="inferred from homology"/>
<organism>
    <name type="scientific">Influenza B virus (strain B/Ann Arbor/1/1966 [cold-adapted])</name>
    <dbReference type="NCBI Taxonomy" id="11522"/>
    <lineage>
        <taxon>Viruses</taxon>
        <taxon>Riboviria</taxon>
        <taxon>Orthornavirae</taxon>
        <taxon>Negarnaviricota</taxon>
        <taxon>Polyploviricotina</taxon>
        <taxon>Insthoviricetes</taxon>
        <taxon>Articulavirales</taxon>
        <taxon>Orthomyxoviridae</taxon>
        <taxon>Betainfluenzavirus</taxon>
        <taxon>Betainfluenzavirus influenzae</taxon>
        <taxon>Influenza B virus</taxon>
    </lineage>
</organism>
<reference key="1">
    <citation type="journal article" date="1988" name="Virology">
        <title>Sequence comparison of wild-type and cold-adapted B/Ann Arbor/1/66 influenza virus genes.</title>
        <authorList>
            <person name="Deborde D.C."/>
            <person name="Donabedian A.M."/>
            <person name="Herlocher M.L."/>
            <person name="Naeve C.W."/>
            <person name="Maassab H.F."/>
        </authorList>
    </citation>
    <scope>NUCLEOTIDE SEQUENCE [GENOMIC RNA]</scope>
</reference>
<feature type="chain" id="PRO_0000078896" description="Matrix protein 2">
    <location>
        <begin position="1"/>
        <end position="109"/>
    </location>
</feature>
<feature type="topological domain" description="Virion surface" evidence="2">
    <location>
        <begin position="1"/>
        <end position="4"/>
    </location>
</feature>
<feature type="transmembrane region" description="Helical; Signal-anchor for type III membrane protein" evidence="2">
    <location>
        <begin position="5"/>
        <end position="27"/>
    </location>
</feature>
<feature type="topological domain" description="Intravirion" evidence="2">
    <location>
        <begin position="28"/>
        <end position="109"/>
    </location>
</feature>
<feature type="coiled-coil region" evidence="2">
    <location>
        <begin position="58"/>
        <end position="83"/>
    </location>
</feature>
<feature type="site" description="Essential for channel activity, possibly by being protonated during channel activation, and by forming the channel gate and the selective filter" evidence="1">
    <location>
        <position position="19"/>
    </location>
</feature>
<feature type="site" description="Seems to be involved in pH gating" evidence="1">
    <location>
        <position position="23"/>
    </location>
</feature>
<dbReference type="EMBL" id="M20175">
    <property type="protein sequence ID" value="AAA66415.1"/>
    <property type="molecule type" value="Genomic_RNA"/>
</dbReference>
<dbReference type="PIR" id="B30064">
    <property type="entry name" value="MFIV2C"/>
</dbReference>
<dbReference type="SMR" id="P13881"/>
<dbReference type="GO" id="GO:0020002">
    <property type="term" value="C:host cell plasma membrane"/>
    <property type="evidence" value="ECO:0007669"/>
    <property type="project" value="UniProtKB-SubCell"/>
</dbReference>
<dbReference type="GO" id="GO:0016020">
    <property type="term" value="C:membrane"/>
    <property type="evidence" value="ECO:0007669"/>
    <property type="project" value="UniProtKB-KW"/>
</dbReference>
<dbReference type="GO" id="GO:0055036">
    <property type="term" value="C:virion membrane"/>
    <property type="evidence" value="ECO:0007669"/>
    <property type="project" value="UniProtKB-SubCell"/>
</dbReference>
<dbReference type="GO" id="GO:0015267">
    <property type="term" value="F:channel activity"/>
    <property type="evidence" value="ECO:0007669"/>
    <property type="project" value="UniProtKB-KW"/>
</dbReference>
<dbReference type="GO" id="GO:1902600">
    <property type="term" value="P:proton transmembrane transport"/>
    <property type="evidence" value="ECO:0007669"/>
    <property type="project" value="UniProtKB-KW"/>
</dbReference>
<dbReference type="Gene3D" id="6.10.250.350">
    <property type="match status" value="1"/>
</dbReference>
<dbReference type="InterPro" id="IPR006859">
    <property type="entry name" value="Flu_B_M2"/>
</dbReference>
<dbReference type="Pfam" id="PF04772">
    <property type="entry name" value="Flu_B_M2"/>
    <property type="match status" value="1"/>
</dbReference>
<evidence type="ECO:0000250" key="1"/>
<evidence type="ECO:0000255" key="2"/>
<evidence type="ECO:0000305" key="3"/>
<name>BM2_INBAC</name>
<gene>
    <name type="primary">M</name>
</gene>
<keyword id="KW-0175">Coiled coil</keyword>
<keyword id="KW-1032">Host cell membrane</keyword>
<keyword id="KW-1043">Host membrane</keyword>
<keyword id="KW-0375">Hydrogen ion transport</keyword>
<keyword id="KW-0407">Ion channel</keyword>
<keyword id="KW-0406">Ion transport</keyword>
<keyword id="KW-0472">Membrane</keyword>
<keyword id="KW-0597">Phosphoprotein</keyword>
<keyword id="KW-0735">Signal-anchor</keyword>
<keyword id="KW-0812">Transmembrane</keyword>
<keyword id="KW-1133">Transmembrane helix</keyword>
<keyword id="KW-0813">Transport</keyword>
<keyword id="KW-1182">Viral ion channel</keyword>
<keyword id="KW-0946">Virion</keyword>
<accession>P13881</accession>
<sequence>MLEPFQILSICSFILSALHFMAWTIGHLNQIKRGVNLKIRIRNPNKETINREVSILRHSYQKEIQAKETMKEVLSDNMEILSDHIVIEGLSAEEIIKMGETVLEVEELQ</sequence>
<organismHost>
    <name type="scientific">Homo sapiens</name>
    <name type="common">Human</name>
    <dbReference type="NCBI Taxonomy" id="9606"/>
</organismHost>